<accession>Q4WVZ0</accession>
<name>YA800_ASPFU</name>
<proteinExistence type="inferred from homology"/>
<organism>
    <name type="scientific">Aspergillus fumigatus (strain ATCC MYA-4609 / CBS 101355 / FGSC A1100 / Af293)</name>
    <name type="common">Neosartorya fumigata</name>
    <dbReference type="NCBI Taxonomy" id="330879"/>
    <lineage>
        <taxon>Eukaryota</taxon>
        <taxon>Fungi</taxon>
        <taxon>Dikarya</taxon>
        <taxon>Ascomycota</taxon>
        <taxon>Pezizomycotina</taxon>
        <taxon>Eurotiomycetes</taxon>
        <taxon>Eurotiomycetidae</taxon>
        <taxon>Eurotiales</taxon>
        <taxon>Aspergillaceae</taxon>
        <taxon>Aspergillus</taxon>
        <taxon>Aspergillus subgen. Fumigati</taxon>
    </lineage>
</organism>
<comment type="similarity">
    <text evidence="1">Belongs to the PaiB family.</text>
</comment>
<feature type="chain" id="PRO_0000226090" description="Uncharacterized protein AFUA_5G13800">
    <location>
        <begin position="1"/>
        <end position="261"/>
    </location>
</feature>
<sequence length="261" mass="28949">MYLRAVHAETHIPLLQQFIRDNPLGILTTAIKSPNYPLLQSSHIPFVLDIPDTPTDKANSDLTPGTLRGHIAKQNPQAKALMEALAQHQAQTQSTTLELPDEVLILFNGPHHHYVTPKFYKDTKPATGKVVPTWNYSAVQAYGKITVYCDSKAEETGAFLSRQVNDLSRHAETAIMGYTGGERPGPWEVSDAPENYIELLKKNIIGVKVRIERLQGKFKMSQEMGAGDREGVIEGFEKLGTEVGMGIAKTVKERGDMKDKK</sequence>
<dbReference type="EMBL" id="AAHF01000003">
    <property type="protein sequence ID" value="EAL91236.1"/>
    <property type="molecule type" value="Genomic_DNA"/>
</dbReference>
<dbReference type="RefSeq" id="XP_753274.1">
    <property type="nucleotide sequence ID" value="XM_748181.1"/>
</dbReference>
<dbReference type="SMR" id="Q4WVZ0"/>
<dbReference type="EnsemblFungi" id="EAL91236">
    <property type="protein sequence ID" value="EAL91236"/>
    <property type="gene ID" value="AFUA_5G13800"/>
</dbReference>
<dbReference type="GeneID" id="3510723"/>
<dbReference type="KEGG" id="afm:AFUA_5G13800"/>
<dbReference type="VEuPathDB" id="FungiDB:Afu5g13800"/>
<dbReference type="eggNOG" id="ENOG502RCZR">
    <property type="taxonomic scope" value="Eukaryota"/>
</dbReference>
<dbReference type="HOGENOM" id="CLU_065853_1_0_1"/>
<dbReference type="InParanoid" id="Q4WVZ0"/>
<dbReference type="OMA" id="IYHDTKD"/>
<dbReference type="OrthoDB" id="2101473at2759"/>
<dbReference type="Proteomes" id="UP000002530">
    <property type="component" value="Chromosome 5"/>
</dbReference>
<dbReference type="Gene3D" id="2.30.110.10">
    <property type="entry name" value="Electron Transport, Fmn-binding Protein, Chain A"/>
    <property type="match status" value="1"/>
</dbReference>
<dbReference type="InterPro" id="IPR012349">
    <property type="entry name" value="Split_barrel_FMN-bd"/>
</dbReference>
<dbReference type="InterPro" id="IPR007396">
    <property type="entry name" value="TR_PAI2-type"/>
</dbReference>
<dbReference type="PANTHER" id="PTHR35802">
    <property type="entry name" value="PROTEASE SYNTHASE AND SPORULATION PROTEIN PAI 2"/>
    <property type="match status" value="1"/>
</dbReference>
<dbReference type="PANTHER" id="PTHR35802:SF1">
    <property type="entry name" value="PROTEASE SYNTHASE AND SPORULATION PROTEIN PAI 2"/>
    <property type="match status" value="1"/>
</dbReference>
<dbReference type="Pfam" id="PF04299">
    <property type="entry name" value="FMN_bind_2"/>
    <property type="match status" value="1"/>
</dbReference>
<dbReference type="PIRSF" id="PIRSF010372">
    <property type="entry name" value="PaiB"/>
    <property type="match status" value="1"/>
</dbReference>
<dbReference type="SUPFAM" id="SSF50475">
    <property type="entry name" value="FMN-binding split barrel"/>
    <property type="match status" value="1"/>
</dbReference>
<evidence type="ECO:0000305" key="1"/>
<reference key="1">
    <citation type="journal article" date="2005" name="Nature">
        <title>Genomic sequence of the pathogenic and allergenic filamentous fungus Aspergillus fumigatus.</title>
        <authorList>
            <person name="Nierman W.C."/>
            <person name="Pain A."/>
            <person name="Anderson M.J."/>
            <person name="Wortman J.R."/>
            <person name="Kim H.S."/>
            <person name="Arroyo J."/>
            <person name="Berriman M."/>
            <person name="Abe K."/>
            <person name="Archer D.B."/>
            <person name="Bermejo C."/>
            <person name="Bennett J.W."/>
            <person name="Bowyer P."/>
            <person name="Chen D."/>
            <person name="Collins M."/>
            <person name="Coulsen R."/>
            <person name="Davies R."/>
            <person name="Dyer P.S."/>
            <person name="Farman M.L."/>
            <person name="Fedorova N."/>
            <person name="Fedorova N.D."/>
            <person name="Feldblyum T.V."/>
            <person name="Fischer R."/>
            <person name="Fosker N."/>
            <person name="Fraser A."/>
            <person name="Garcia J.L."/>
            <person name="Garcia M.J."/>
            <person name="Goble A."/>
            <person name="Goldman G.H."/>
            <person name="Gomi K."/>
            <person name="Griffith-Jones S."/>
            <person name="Gwilliam R."/>
            <person name="Haas B.J."/>
            <person name="Haas H."/>
            <person name="Harris D.E."/>
            <person name="Horiuchi H."/>
            <person name="Huang J."/>
            <person name="Humphray S."/>
            <person name="Jimenez J."/>
            <person name="Keller N."/>
            <person name="Khouri H."/>
            <person name="Kitamoto K."/>
            <person name="Kobayashi T."/>
            <person name="Konzack S."/>
            <person name="Kulkarni R."/>
            <person name="Kumagai T."/>
            <person name="Lafton A."/>
            <person name="Latge J.-P."/>
            <person name="Li W."/>
            <person name="Lord A."/>
            <person name="Lu C."/>
            <person name="Majoros W.H."/>
            <person name="May G.S."/>
            <person name="Miller B.L."/>
            <person name="Mohamoud Y."/>
            <person name="Molina M."/>
            <person name="Monod M."/>
            <person name="Mouyna I."/>
            <person name="Mulligan S."/>
            <person name="Murphy L.D."/>
            <person name="O'Neil S."/>
            <person name="Paulsen I."/>
            <person name="Penalva M.A."/>
            <person name="Pertea M."/>
            <person name="Price C."/>
            <person name="Pritchard B.L."/>
            <person name="Quail M.A."/>
            <person name="Rabbinowitsch E."/>
            <person name="Rawlins N."/>
            <person name="Rajandream M.A."/>
            <person name="Reichard U."/>
            <person name="Renauld H."/>
            <person name="Robson G.D."/>
            <person name="Rodriguez de Cordoba S."/>
            <person name="Rodriguez-Pena J.M."/>
            <person name="Ronning C.M."/>
            <person name="Rutter S."/>
            <person name="Salzberg S.L."/>
            <person name="Sanchez M."/>
            <person name="Sanchez-Ferrero J.C."/>
            <person name="Saunders D."/>
            <person name="Seeger K."/>
            <person name="Squares R."/>
            <person name="Squares S."/>
            <person name="Takeuchi M."/>
            <person name="Tekaia F."/>
            <person name="Turner G."/>
            <person name="Vazquez de Aldana C.R."/>
            <person name="Weidman J."/>
            <person name="White O."/>
            <person name="Woodward J.R."/>
            <person name="Yu J.-H."/>
            <person name="Fraser C.M."/>
            <person name="Galagan J.E."/>
            <person name="Asai K."/>
            <person name="Machida M."/>
            <person name="Hall N."/>
            <person name="Barrell B.G."/>
            <person name="Denning D.W."/>
        </authorList>
    </citation>
    <scope>NUCLEOTIDE SEQUENCE [LARGE SCALE GENOMIC DNA]</scope>
    <source>
        <strain>ATCC MYA-4609 / CBS 101355 / FGSC A1100 / Af293</strain>
    </source>
</reference>
<gene>
    <name type="ORF">AFUA_5G13800</name>
</gene>
<keyword id="KW-1185">Reference proteome</keyword>
<protein>
    <recommendedName>
        <fullName>Uncharacterized protein AFUA_5G13800</fullName>
    </recommendedName>
</protein>